<proteinExistence type="inferred from homology"/>
<protein>
    <recommendedName>
        <fullName evidence="1">DNA gyrase inhibitor YacG</fullName>
    </recommendedName>
</protein>
<gene>
    <name evidence="1" type="primary">yacG</name>
    <name type="ordered locus">CPS_4452</name>
</gene>
<dbReference type="EMBL" id="CP000083">
    <property type="protein sequence ID" value="AAZ25780.1"/>
    <property type="molecule type" value="Genomic_DNA"/>
</dbReference>
<dbReference type="RefSeq" id="WP_011045181.1">
    <property type="nucleotide sequence ID" value="NC_003910.7"/>
</dbReference>
<dbReference type="SMR" id="Q47VS2"/>
<dbReference type="STRING" id="167879.CPS_4452"/>
<dbReference type="KEGG" id="cps:CPS_4452"/>
<dbReference type="HOGENOM" id="CLU_178280_1_2_6"/>
<dbReference type="Proteomes" id="UP000000547">
    <property type="component" value="Chromosome"/>
</dbReference>
<dbReference type="GO" id="GO:0008657">
    <property type="term" value="F:DNA topoisomerase type II (double strand cut, ATP-hydrolyzing) inhibitor activity"/>
    <property type="evidence" value="ECO:0007669"/>
    <property type="project" value="UniProtKB-UniRule"/>
</dbReference>
<dbReference type="GO" id="GO:0008270">
    <property type="term" value="F:zinc ion binding"/>
    <property type="evidence" value="ECO:0007669"/>
    <property type="project" value="UniProtKB-UniRule"/>
</dbReference>
<dbReference type="GO" id="GO:0006355">
    <property type="term" value="P:regulation of DNA-templated transcription"/>
    <property type="evidence" value="ECO:0007669"/>
    <property type="project" value="InterPro"/>
</dbReference>
<dbReference type="Gene3D" id="3.30.50.10">
    <property type="entry name" value="Erythroid Transcription Factor GATA-1, subunit A"/>
    <property type="match status" value="1"/>
</dbReference>
<dbReference type="HAMAP" id="MF_00649">
    <property type="entry name" value="DNA_gyrase_inhibitor_YacG"/>
    <property type="match status" value="1"/>
</dbReference>
<dbReference type="InterPro" id="IPR005584">
    <property type="entry name" value="DNA_gyrase_inhibitor_YacG"/>
</dbReference>
<dbReference type="InterPro" id="IPR013088">
    <property type="entry name" value="Znf_NHR/GATA"/>
</dbReference>
<dbReference type="NCBIfam" id="NF001638">
    <property type="entry name" value="PRK00418.1"/>
    <property type="match status" value="1"/>
</dbReference>
<dbReference type="PANTHER" id="PTHR36150">
    <property type="entry name" value="DNA GYRASE INHIBITOR YACG"/>
    <property type="match status" value="1"/>
</dbReference>
<dbReference type="PANTHER" id="PTHR36150:SF1">
    <property type="entry name" value="DNA GYRASE INHIBITOR YACG"/>
    <property type="match status" value="1"/>
</dbReference>
<dbReference type="Pfam" id="PF03884">
    <property type="entry name" value="YacG"/>
    <property type="match status" value="1"/>
</dbReference>
<dbReference type="SUPFAM" id="SSF57716">
    <property type="entry name" value="Glucocorticoid receptor-like (DNA-binding domain)"/>
    <property type="match status" value="1"/>
</dbReference>
<comment type="function">
    <text evidence="1">Inhibits all the catalytic activities of DNA gyrase by preventing its interaction with DNA. Acts by binding directly to the C-terminal domain of GyrB, which probably disrupts DNA binding by the gyrase.</text>
</comment>
<comment type="cofactor">
    <cofactor evidence="1">
        <name>Zn(2+)</name>
        <dbReference type="ChEBI" id="CHEBI:29105"/>
    </cofactor>
    <text evidence="1">Binds 1 zinc ion.</text>
</comment>
<comment type="subunit">
    <text evidence="1">Interacts with GyrB.</text>
</comment>
<comment type="similarity">
    <text evidence="1">Belongs to the DNA gyrase inhibitor YacG family.</text>
</comment>
<accession>Q47VS2</accession>
<evidence type="ECO:0000255" key="1">
    <source>
        <dbReference type="HAMAP-Rule" id="MF_00649"/>
    </source>
</evidence>
<name>YACG_COLP3</name>
<feature type="chain" id="PRO_1000082721" description="DNA gyrase inhibitor YacG">
    <location>
        <begin position="1"/>
        <end position="78"/>
    </location>
</feature>
<feature type="binding site" evidence="1">
    <location>
        <position position="7"/>
    </location>
    <ligand>
        <name>Zn(2+)</name>
        <dbReference type="ChEBI" id="CHEBI:29105"/>
    </ligand>
</feature>
<feature type="binding site" evidence="1">
    <location>
        <position position="10"/>
    </location>
    <ligand>
        <name>Zn(2+)</name>
        <dbReference type="ChEBI" id="CHEBI:29105"/>
    </ligand>
</feature>
<feature type="binding site" evidence="1">
    <location>
        <position position="26"/>
    </location>
    <ligand>
        <name>Zn(2+)</name>
        <dbReference type="ChEBI" id="CHEBI:29105"/>
    </ligand>
</feature>
<feature type="binding site" evidence="1">
    <location>
        <position position="30"/>
    </location>
    <ligand>
        <name>Zn(2+)</name>
        <dbReference type="ChEBI" id="CHEBI:29105"/>
    </ligand>
</feature>
<keyword id="KW-0479">Metal-binding</keyword>
<keyword id="KW-0862">Zinc</keyword>
<sequence>MTLKVPCPQCQKTVVWQASSEFRPFCSKRCQLIDLGEWAEESHKISQNIQVDTVLSEEMLDAMEDEFLLNNKFFVEPE</sequence>
<organism>
    <name type="scientific">Colwellia psychrerythraea (strain 34H / ATCC BAA-681)</name>
    <name type="common">Vibrio psychroerythus</name>
    <dbReference type="NCBI Taxonomy" id="167879"/>
    <lineage>
        <taxon>Bacteria</taxon>
        <taxon>Pseudomonadati</taxon>
        <taxon>Pseudomonadota</taxon>
        <taxon>Gammaproteobacteria</taxon>
        <taxon>Alteromonadales</taxon>
        <taxon>Colwelliaceae</taxon>
        <taxon>Colwellia</taxon>
    </lineage>
</organism>
<reference key="1">
    <citation type="journal article" date="2005" name="Proc. Natl. Acad. Sci. U.S.A.">
        <title>The psychrophilic lifestyle as revealed by the genome sequence of Colwellia psychrerythraea 34H through genomic and proteomic analyses.</title>
        <authorList>
            <person name="Methe B.A."/>
            <person name="Nelson K.E."/>
            <person name="Deming J.W."/>
            <person name="Momen B."/>
            <person name="Melamud E."/>
            <person name="Zhang X."/>
            <person name="Moult J."/>
            <person name="Madupu R."/>
            <person name="Nelson W.C."/>
            <person name="Dodson R.J."/>
            <person name="Brinkac L.M."/>
            <person name="Daugherty S.C."/>
            <person name="Durkin A.S."/>
            <person name="DeBoy R.T."/>
            <person name="Kolonay J.F."/>
            <person name="Sullivan S.A."/>
            <person name="Zhou L."/>
            <person name="Davidsen T.M."/>
            <person name="Wu M."/>
            <person name="Huston A.L."/>
            <person name="Lewis M."/>
            <person name="Weaver B."/>
            <person name="Weidman J.F."/>
            <person name="Khouri H."/>
            <person name="Utterback T.R."/>
            <person name="Feldblyum T.V."/>
            <person name="Fraser C.M."/>
        </authorList>
    </citation>
    <scope>NUCLEOTIDE SEQUENCE [LARGE SCALE GENOMIC DNA]</scope>
    <source>
        <strain>34H / ATCC BAA-681</strain>
    </source>
</reference>